<evidence type="ECO:0000255" key="1"/>
<evidence type="ECO:0000269" key="2">
    <source>
    </source>
</evidence>
<evidence type="ECO:0000305" key="3"/>
<sequence>MGVISVQLVVTMVMASVIQKIIPHYSFARWLLCSGSLRWYQHPTEDELRTLAGKQQKGGKSKKDRKYNGHLENKPMTIPKDIDLQLETKCIAEVDTLALHYFPEFQWLVDFTVAATVVYLITELYFCVAEPSGEMNISVVWSLLVLAFVMKILFSLTAHYFRLEEGGERSLCITFAFFFFVKAMAILIVTENYLEFGLETGFANFSESAVQFLENQGLESQGPISKLTFKLILALLCALIGAFLTFPGLRLAQMHLDALTLNNCKVTQTLLHINFLAPLIMVLLWVKPITKDYITNPTFGKDNVPLMSEKTYDTLRLWVILLLCVLRLAMMRHHLQAYLNLAQKGVLQMKKEAGRISTVDLQKMVARVFYYLCVIALQYIAPLVMLLHTTLLLKTLGGHSWVIYSDESLPCLSNEDSSPAEVGQSQMEASQTVAQLSVALGGLRTVFSPLLFRGLLSFFTWWIAACLFSTSLFGLFYHQYLMAA</sequence>
<accession>Q7SY10</accession>
<keyword id="KW-1003">Cell membrane</keyword>
<keyword id="KW-0325">Glycoprotein</keyword>
<keyword id="KW-0472">Membrane</keyword>
<keyword id="KW-1185">Reference proteome</keyword>
<keyword id="KW-0812">Transmembrane</keyword>
<keyword id="KW-1133">Transmembrane helix</keyword>
<reference key="1">
    <citation type="journal article" date="2013" name="Nature">
        <title>The zebrafish reference genome sequence and its relationship to the human genome.</title>
        <authorList>
            <person name="Howe K."/>
            <person name="Clark M.D."/>
            <person name="Torroja C.F."/>
            <person name="Torrance J."/>
            <person name="Berthelot C."/>
            <person name="Muffato M."/>
            <person name="Collins J.E."/>
            <person name="Humphray S."/>
            <person name="McLaren K."/>
            <person name="Matthews L."/>
            <person name="McLaren S."/>
            <person name="Sealy I."/>
            <person name="Caccamo M."/>
            <person name="Churcher C."/>
            <person name="Scott C."/>
            <person name="Barrett J.C."/>
            <person name="Koch R."/>
            <person name="Rauch G.J."/>
            <person name="White S."/>
            <person name="Chow W."/>
            <person name="Kilian B."/>
            <person name="Quintais L.T."/>
            <person name="Guerra-Assuncao J.A."/>
            <person name="Zhou Y."/>
            <person name="Gu Y."/>
            <person name="Yen J."/>
            <person name="Vogel J.H."/>
            <person name="Eyre T."/>
            <person name="Redmond S."/>
            <person name="Banerjee R."/>
            <person name="Chi J."/>
            <person name="Fu B."/>
            <person name="Langley E."/>
            <person name="Maguire S.F."/>
            <person name="Laird G.K."/>
            <person name="Lloyd D."/>
            <person name="Kenyon E."/>
            <person name="Donaldson S."/>
            <person name="Sehra H."/>
            <person name="Almeida-King J."/>
            <person name="Loveland J."/>
            <person name="Trevanion S."/>
            <person name="Jones M."/>
            <person name="Quail M."/>
            <person name="Willey D."/>
            <person name="Hunt A."/>
            <person name="Burton J."/>
            <person name="Sims S."/>
            <person name="McLay K."/>
            <person name="Plumb B."/>
            <person name="Davis J."/>
            <person name="Clee C."/>
            <person name="Oliver K."/>
            <person name="Clark R."/>
            <person name="Riddle C."/>
            <person name="Elliot D."/>
            <person name="Threadgold G."/>
            <person name="Harden G."/>
            <person name="Ware D."/>
            <person name="Begum S."/>
            <person name="Mortimore B."/>
            <person name="Kerry G."/>
            <person name="Heath P."/>
            <person name="Phillimore B."/>
            <person name="Tracey A."/>
            <person name="Corby N."/>
            <person name="Dunn M."/>
            <person name="Johnson C."/>
            <person name="Wood J."/>
            <person name="Clark S."/>
            <person name="Pelan S."/>
            <person name="Griffiths G."/>
            <person name="Smith M."/>
            <person name="Glithero R."/>
            <person name="Howden P."/>
            <person name="Barker N."/>
            <person name="Lloyd C."/>
            <person name="Stevens C."/>
            <person name="Harley J."/>
            <person name="Holt K."/>
            <person name="Panagiotidis G."/>
            <person name="Lovell J."/>
            <person name="Beasley H."/>
            <person name="Henderson C."/>
            <person name="Gordon D."/>
            <person name="Auger K."/>
            <person name="Wright D."/>
            <person name="Collins J."/>
            <person name="Raisen C."/>
            <person name="Dyer L."/>
            <person name="Leung K."/>
            <person name="Robertson L."/>
            <person name="Ambridge K."/>
            <person name="Leongamornlert D."/>
            <person name="McGuire S."/>
            <person name="Gilderthorp R."/>
            <person name="Griffiths C."/>
            <person name="Manthravadi D."/>
            <person name="Nichol S."/>
            <person name="Barker G."/>
            <person name="Whitehead S."/>
            <person name="Kay M."/>
            <person name="Brown J."/>
            <person name="Murnane C."/>
            <person name="Gray E."/>
            <person name="Humphries M."/>
            <person name="Sycamore N."/>
            <person name="Barker D."/>
            <person name="Saunders D."/>
            <person name="Wallis J."/>
            <person name="Babbage A."/>
            <person name="Hammond S."/>
            <person name="Mashreghi-Mohammadi M."/>
            <person name="Barr L."/>
            <person name="Martin S."/>
            <person name="Wray P."/>
            <person name="Ellington A."/>
            <person name="Matthews N."/>
            <person name="Ellwood M."/>
            <person name="Woodmansey R."/>
            <person name="Clark G."/>
            <person name="Cooper J."/>
            <person name="Tromans A."/>
            <person name="Grafham D."/>
            <person name="Skuce C."/>
            <person name="Pandian R."/>
            <person name="Andrews R."/>
            <person name="Harrison E."/>
            <person name="Kimberley A."/>
            <person name="Garnett J."/>
            <person name="Fosker N."/>
            <person name="Hall R."/>
            <person name="Garner P."/>
            <person name="Kelly D."/>
            <person name="Bird C."/>
            <person name="Palmer S."/>
            <person name="Gehring I."/>
            <person name="Berger A."/>
            <person name="Dooley C.M."/>
            <person name="Ersan-Urun Z."/>
            <person name="Eser C."/>
            <person name="Geiger H."/>
            <person name="Geisler M."/>
            <person name="Karotki L."/>
            <person name="Kirn A."/>
            <person name="Konantz J."/>
            <person name="Konantz M."/>
            <person name="Oberlander M."/>
            <person name="Rudolph-Geiger S."/>
            <person name="Teucke M."/>
            <person name="Lanz C."/>
            <person name="Raddatz G."/>
            <person name="Osoegawa K."/>
            <person name="Zhu B."/>
            <person name="Rapp A."/>
            <person name="Widaa S."/>
            <person name="Langford C."/>
            <person name="Yang F."/>
            <person name="Schuster S.C."/>
            <person name="Carter N.P."/>
            <person name="Harrow J."/>
            <person name="Ning Z."/>
            <person name="Herrero J."/>
            <person name="Searle S.M."/>
            <person name="Enright A."/>
            <person name="Geisler R."/>
            <person name="Plasterk R.H."/>
            <person name="Lee C."/>
            <person name="Westerfield M."/>
            <person name="de Jong P.J."/>
            <person name="Zon L.I."/>
            <person name="Postlethwait J.H."/>
            <person name="Nusslein-Volhard C."/>
            <person name="Hubbard T.J."/>
            <person name="Roest Crollius H."/>
            <person name="Rogers J."/>
            <person name="Stemple D.L."/>
        </authorList>
    </citation>
    <scope>NUCLEOTIDE SEQUENCE [LARGE SCALE GENOMIC DNA]</scope>
    <source>
        <strain>Tuebingen</strain>
    </source>
</reference>
<reference key="2">
    <citation type="submission" date="2003-07" db="EMBL/GenBank/DDBJ databases">
        <authorList>
            <consortium name="NIH - Zebrafish Gene Collection (ZGC) project"/>
        </authorList>
    </citation>
    <scope>NUCLEOTIDE SEQUENCE [LARGE SCALE MRNA]</scope>
    <source>
        <strain>SJD</strain>
    </source>
</reference>
<reference key="3">
    <citation type="journal article" date="2021" name="Proc. Natl. Acad. Sci. U.S.A.">
        <title>The zebrafish grime mutant uncovers an evolutionarily conserved role for Tmem161b in the control of cardiac rhythm.</title>
        <authorList>
            <person name="Koopman C.D."/>
            <person name="De Angelis J."/>
            <person name="Iyer S.P."/>
            <person name="Verkerk A.O."/>
            <person name="Da Silva J."/>
            <person name="Berecki G."/>
            <person name="Jeanes A."/>
            <person name="Baillie G.J."/>
            <person name="Paterson S."/>
            <person name="Uribe V."/>
            <person name="Ehrlich O.V."/>
            <person name="Robinson S.D."/>
            <person name="Garric L."/>
            <person name="Petrou S."/>
            <person name="Simons C."/>
            <person name="Vetter I."/>
            <person name="Hogan B.M."/>
            <person name="de Boer T.P."/>
            <person name="Bakkers J."/>
            <person name="Smith K.A."/>
        </authorList>
    </citation>
    <scope>FUNCTION</scope>
    <scope>DISRUPTION PHENOTYPE</scope>
    <scope>SUBCELLULAR LOCATION</scope>
</reference>
<comment type="function">
    <text evidence="2">Essential for maintaining normal cardiac rhythm in the developing heart and for neonatal survival (PubMed:33597309). Inhibits potassium and calcium currents in the cardiomyocytes, this assists in timely action potential repolarization and thereby maintains normal cardiac rhythm (PubMed:33597309).</text>
</comment>
<comment type="subcellular location">
    <subcellularLocation>
        <location evidence="2">Cell membrane</location>
        <topology evidence="1">Multi-pass membrane protein</topology>
    </subcellularLocation>
</comment>
<comment type="disruption phenotype">
    <text evidence="2">Mutants display highly specific cardiac arrhythmia and die by 15 days post-fertilization (dpf) (PubMed:33597309). Exhibit skipped ventricular beats, irregular beats and slower heart rate but their hearts are morphologically indistinguishable from wild-type counterparts (PubMed:33597309). Increased potassium and calcium currents observed in isolated cardiomyocytes (PubMed:33597309).</text>
</comment>
<comment type="similarity">
    <text evidence="3">Belongs to the TMEM161 family.</text>
</comment>
<name>T161B_DANRE</name>
<protein>
    <recommendedName>
        <fullName>Transmembrane protein 161B</fullName>
    </recommendedName>
</protein>
<gene>
    <name type="primary">tmem161b</name>
    <name type="ORF">si:dkey-195m1.1</name>
    <name type="ORF">zgc:63626</name>
</gene>
<proteinExistence type="evidence at transcript level"/>
<feature type="chain" id="PRO_0000288091" description="Transmembrane protein 161B">
    <location>
        <begin position="1"/>
        <end position="484"/>
    </location>
</feature>
<feature type="transmembrane region" description="Helical" evidence="1">
    <location>
        <begin position="108"/>
        <end position="128"/>
    </location>
</feature>
<feature type="transmembrane region" description="Helical" evidence="1">
    <location>
        <begin position="137"/>
        <end position="157"/>
    </location>
</feature>
<feature type="transmembrane region" description="Helical" evidence="1">
    <location>
        <begin position="170"/>
        <end position="190"/>
    </location>
</feature>
<feature type="transmembrane region" description="Helical" evidence="1">
    <location>
        <begin position="229"/>
        <end position="249"/>
    </location>
</feature>
<feature type="transmembrane region" description="Helical" evidence="1">
    <location>
        <begin position="266"/>
        <end position="286"/>
    </location>
</feature>
<feature type="transmembrane region" description="Helical" evidence="1">
    <location>
        <begin position="368"/>
        <end position="388"/>
    </location>
</feature>
<feature type="transmembrane region" description="Helical" evidence="1">
    <location>
        <begin position="456"/>
        <end position="476"/>
    </location>
</feature>
<feature type="glycosylation site" description="N-linked (GlcNAc...) asparagine" evidence="1">
    <location>
        <position position="136"/>
    </location>
</feature>
<feature type="glycosylation site" description="N-linked (GlcNAc...) asparagine" evidence="1">
    <location>
        <position position="204"/>
    </location>
</feature>
<dbReference type="EMBL" id="BX470189">
    <property type="protein sequence ID" value="CAM15252.1"/>
    <property type="molecule type" value="Genomic_DNA"/>
</dbReference>
<dbReference type="EMBL" id="CR405703">
    <property type="protein sequence ID" value="CAM15252.1"/>
    <property type="status" value="JOINED"/>
    <property type="molecule type" value="Genomic_DNA"/>
</dbReference>
<dbReference type="EMBL" id="CR405703">
    <property type="protein sequence ID" value="CAM16671.1"/>
    <property type="molecule type" value="Genomic_DNA"/>
</dbReference>
<dbReference type="EMBL" id="BX470189">
    <property type="protein sequence ID" value="CAM16671.1"/>
    <property type="status" value="JOINED"/>
    <property type="molecule type" value="Genomic_DNA"/>
</dbReference>
<dbReference type="EMBL" id="BC055170">
    <property type="protein sequence ID" value="AAH55170.1"/>
    <property type="molecule type" value="mRNA"/>
</dbReference>
<dbReference type="RefSeq" id="NP_998536.1">
    <property type="nucleotide sequence ID" value="NM_213371.1"/>
</dbReference>
<dbReference type="FunCoup" id="Q7SY10">
    <property type="interactions" value="723"/>
</dbReference>
<dbReference type="STRING" id="7955.ENSDARP00000072863"/>
<dbReference type="GlyCosmos" id="Q7SY10">
    <property type="glycosylation" value="2 sites, No reported glycans"/>
</dbReference>
<dbReference type="PaxDb" id="7955-ENSDARP00000072863"/>
<dbReference type="Ensembl" id="ENSDART00000078401">
    <property type="protein sequence ID" value="ENSDARP00000072863"/>
    <property type="gene ID" value="ENSDARG00000055989"/>
</dbReference>
<dbReference type="GeneID" id="406680"/>
<dbReference type="KEGG" id="dre:406680"/>
<dbReference type="AGR" id="ZFIN:ZDB-GENE-040426-2693"/>
<dbReference type="CTD" id="153396"/>
<dbReference type="ZFIN" id="ZDB-GENE-040426-2693">
    <property type="gene designation" value="tmem161b"/>
</dbReference>
<dbReference type="eggNOG" id="KOG3978">
    <property type="taxonomic scope" value="Eukaryota"/>
</dbReference>
<dbReference type="HOGENOM" id="CLU_027277_0_0_1"/>
<dbReference type="InParanoid" id="Q7SY10"/>
<dbReference type="OMA" id="RFALMPI"/>
<dbReference type="OrthoDB" id="784140at2759"/>
<dbReference type="PhylomeDB" id="Q7SY10"/>
<dbReference type="TreeFam" id="TF314570"/>
<dbReference type="PRO" id="PR:Q7SY10"/>
<dbReference type="Proteomes" id="UP000000437">
    <property type="component" value="Chromosome 5"/>
</dbReference>
<dbReference type="Bgee" id="ENSDARG00000055989">
    <property type="expression patterns" value="Expressed in mature ovarian follicle and 31 other cell types or tissues"/>
</dbReference>
<dbReference type="GO" id="GO:0005886">
    <property type="term" value="C:plasma membrane"/>
    <property type="evidence" value="ECO:0000314"/>
    <property type="project" value="UniProtKB"/>
</dbReference>
<dbReference type="GO" id="GO:0098901">
    <property type="term" value="P:regulation of cardiac muscle cell action potential"/>
    <property type="evidence" value="ECO:0000315"/>
    <property type="project" value="UniProtKB"/>
</dbReference>
<dbReference type="GO" id="GO:0010882">
    <property type="term" value="P:regulation of cardiac muscle contraction by calcium ion signaling"/>
    <property type="evidence" value="ECO:0000315"/>
    <property type="project" value="ZFIN"/>
</dbReference>
<dbReference type="GO" id="GO:0002027">
    <property type="term" value="P:regulation of heart rate"/>
    <property type="evidence" value="ECO:0000315"/>
    <property type="project" value="UniProtKB"/>
</dbReference>
<dbReference type="InterPro" id="IPR019395">
    <property type="entry name" value="Transmembrane_161A/B"/>
</dbReference>
<dbReference type="PANTHER" id="PTHR13624">
    <property type="entry name" value="RE42071P"/>
    <property type="match status" value="1"/>
</dbReference>
<dbReference type="PANTHER" id="PTHR13624:SF3">
    <property type="entry name" value="TRANSMEMBRANE PROTEIN 161B"/>
    <property type="match status" value="1"/>
</dbReference>
<dbReference type="Pfam" id="PF10268">
    <property type="entry name" value="Tmemb_161AB"/>
    <property type="match status" value="1"/>
</dbReference>
<organism>
    <name type="scientific">Danio rerio</name>
    <name type="common">Zebrafish</name>
    <name type="synonym">Brachydanio rerio</name>
    <dbReference type="NCBI Taxonomy" id="7955"/>
    <lineage>
        <taxon>Eukaryota</taxon>
        <taxon>Metazoa</taxon>
        <taxon>Chordata</taxon>
        <taxon>Craniata</taxon>
        <taxon>Vertebrata</taxon>
        <taxon>Euteleostomi</taxon>
        <taxon>Actinopterygii</taxon>
        <taxon>Neopterygii</taxon>
        <taxon>Teleostei</taxon>
        <taxon>Ostariophysi</taxon>
        <taxon>Cypriniformes</taxon>
        <taxon>Danionidae</taxon>
        <taxon>Danioninae</taxon>
        <taxon>Danio</taxon>
    </lineage>
</organism>